<organism>
    <name type="scientific">Staphylococcus saprophyticus subsp. saprophyticus (strain ATCC 15305 / DSM 20229 / NCIMB 8711 / NCTC 7292 / S-41)</name>
    <dbReference type="NCBI Taxonomy" id="342451"/>
    <lineage>
        <taxon>Bacteria</taxon>
        <taxon>Bacillati</taxon>
        <taxon>Bacillota</taxon>
        <taxon>Bacilli</taxon>
        <taxon>Bacillales</taxon>
        <taxon>Staphylococcaceae</taxon>
        <taxon>Staphylococcus</taxon>
    </lineage>
</organism>
<keyword id="KW-0030">Aminoacyl-tRNA synthetase</keyword>
<keyword id="KW-0067">ATP-binding</keyword>
<keyword id="KW-0963">Cytoplasm</keyword>
<keyword id="KW-0436">Ligase</keyword>
<keyword id="KW-0547">Nucleotide-binding</keyword>
<keyword id="KW-0648">Protein biosynthesis</keyword>
<keyword id="KW-1185">Reference proteome</keyword>
<protein>
    <recommendedName>
        <fullName evidence="1">Histidine--tRNA ligase</fullName>
        <ecNumber evidence="1">6.1.1.21</ecNumber>
    </recommendedName>
    <alternativeName>
        <fullName evidence="1">Histidyl-tRNA synthetase</fullName>
        <shortName evidence="1">HisRS</shortName>
    </alternativeName>
</protein>
<proteinExistence type="inferred from homology"/>
<evidence type="ECO:0000255" key="1">
    <source>
        <dbReference type="HAMAP-Rule" id="MF_00127"/>
    </source>
</evidence>
<reference key="1">
    <citation type="journal article" date="2005" name="Proc. Natl. Acad. Sci. U.S.A.">
        <title>Whole genome sequence of Staphylococcus saprophyticus reveals the pathogenesis of uncomplicated urinary tract infection.</title>
        <authorList>
            <person name="Kuroda M."/>
            <person name="Yamashita A."/>
            <person name="Hirakawa H."/>
            <person name="Kumano M."/>
            <person name="Morikawa K."/>
            <person name="Higashide M."/>
            <person name="Maruyama A."/>
            <person name="Inose Y."/>
            <person name="Matoba K."/>
            <person name="Toh H."/>
            <person name="Kuhara S."/>
            <person name="Hattori M."/>
            <person name="Ohta T."/>
        </authorList>
    </citation>
    <scope>NUCLEOTIDE SEQUENCE [LARGE SCALE GENOMIC DNA]</scope>
    <source>
        <strain>ATCC 15305 / DSM 20229 / NCIMB 8711 / NCTC 7292 / S-41</strain>
    </source>
</reference>
<gene>
    <name evidence="1" type="primary">hisS</name>
    <name type="ordered locus">SSP1128</name>
</gene>
<comment type="catalytic activity">
    <reaction evidence="1">
        <text>tRNA(His) + L-histidine + ATP = L-histidyl-tRNA(His) + AMP + diphosphate + H(+)</text>
        <dbReference type="Rhea" id="RHEA:17313"/>
        <dbReference type="Rhea" id="RHEA-COMP:9665"/>
        <dbReference type="Rhea" id="RHEA-COMP:9689"/>
        <dbReference type="ChEBI" id="CHEBI:15378"/>
        <dbReference type="ChEBI" id="CHEBI:30616"/>
        <dbReference type="ChEBI" id="CHEBI:33019"/>
        <dbReference type="ChEBI" id="CHEBI:57595"/>
        <dbReference type="ChEBI" id="CHEBI:78442"/>
        <dbReference type="ChEBI" id="CHEBI:78527"/>
        <dbReference type="ChEBI" id="CHEBI:456215"/>
        <dbReference type="EC" id="6.1.1.21"/>
    </reaction>
</comment>
<comment type="subunit">
    <text evidence="1">Homodimer.</text>
</comment>
<comment type="subcellular location">
    <subcellularLocation>
        <location evidence="1">Cytoplasm</location>
    </subcellularLocation>
</comment>
<comment type="similarity">
    <text evidence="1">Belongs to the class-II aminoacyl-tRNA synthetase family.</text>
</comment>
<dbReference type="EC" id="6.1.1.21" evidence="1"/>
<dbReference type="EMBL" id="AP008934">
    <property type="protein sequence ID" value="BAE18273.1"/>
    <property type="molecule type" value="Genomic_DNA"/>
</dbReference>
<dbReference type="RefSeq" id="WP_011302956.1">
    <property type="nucleotide sequence ID" value="NZ_MTGA01000038.1"/>
</dbReference>
<dbReference type="SMR" id="Q49Y69"/>
<dbReference type="GeneID" id="3617012"/>
<dbReference type="KEGG" id="ssp:SSP1128"/>
<dbReference type="PATRIC" id="fig|342451.11.peg.1128"/>
<dbReference type="eggNOG" id="COG0124">
    <property type="taxonomic scope" value="Bacteria"/>
</dbReference>
<dbReference type="HOGENOM" id="CLU_025113_1_1_9"/>
<dbReference type="OrthoDB" id="9800814at2"/>
<dbReference type="Proteomes" id="UP000006371">
    <property type="component" value="Chromosome"/>
</dbReference>
<dbReference type="GO" id="GO:0005737">
    <property type="term" value="C:cytoplasm"/>
    <property type="evidence" value="ECO:0007669"/>
    <property type="project" value="UniProtKB-SubCell"/>
</dbReference>
<dbReference type="GO" id="GO:0005524">
    <property type="term" value="F:ATP binding"/>
    <property type="evidence" value="ECO:0007669"/>
    <property type="project" value="UniProtKB-UniRule"/>
</dbReference>
<dbReference type="GO" id="GO:0140096">
    <property type="term" value="F:catalytic activity, acting on a protein"/>
    <property type="evidence" value="ECO:0007669"/>
    <property type="project" value="UniProtKB-ARBA"/>
</dbReference>
<dbReference type="GO" id="GO:0004821">
    <property type="term" value="F:histidine-tRNA ligase activity"/>
    <property type="evidence" value="ECO:0007669"/>
    <property type="project" value="UniProtKB-UniRule"/>
</dbReference>
<dbReference type="GO" id="GO:0016740">
    <property type="term" value="F:transferase activity"/>
    <property type="evidence" value="ECO:0007669"/>
    <property type="project" value="UniProtKB-ARBA"/>
</dbReference>
<dbReference type="GO" id="GO:0006427">
    <property type="term" value="P:histidyl-tRNA aminoacylation"/>
    <property type="evidence" value="ECO:0007669"/>
    <property type="project" value="UniProtKB-UniRule"/>
</dbReference>
<dbReference type="CDD" id="cd00773">
    <property type="entry name" value="HisRS-like_core"/>
    <property type="match status" value="1"/>
</dbReference>
<dbReference type="CDD" id="cd00859">
    <property type="entry name" value="HisRS_anticodon"/>
    <property type="match status" value="1"/>
</dbReference>
<dbReference type="FunFam" id="3.30.930.10:FF:000005">
    <property type="entry name" value="Histidine--tRNA ligase"/>
    <property type="match status" value="1"/>
</dbReference>
<dbReference type="Gene3D" id="3.40.50.800">
    <property type="entry name" value="Anticodon-binding domain"/>
    <property type="match status" value="1"/>
</dbReference>
<dbReference type="Gene3D" id="3.30.930.10">
    <property type="entry name" value="Bira Bifunctional Protein, Domain 2"/>
    <property type="match status" value="1"/>
</dbReference>
<dbReference type="HAMAP" id="MF_00127">
    <property type="entry name" value="His_tRNA_synth"/>
    <property type="match status" value="1"/>
</dbReference>
<dbReference type="InterPro" id="IPR006195">
    <property type="entry name" value="aa-tRNA-synth_II"/>
</dbReference>
<dbReference type="InterPro" id="IPR045864">
    <property type="entry name" value="aa-tRNA-synth_II/BPL/LPL"/>
</dbReference>
<dbReference type="InterPro" id="IPR004154">
    <property type="entry name" value="Anticodon-bd"/>
</dbReference>
<dbReference type="InterPro" id="IPR036621">
    <property type="entry name" value="Anticodon-bd_dom_sf"/>
</dbReference>
<dbReference type="InterPro" id="IPR015807">
    <property type="entry name" value="His-tRNA-ligase"/>
</dbReference>
<dbReference type="InterPro" id="IPR041715">
    <property type="entry name" value="HisRS-like_core"/>
</dbReference>
<dbReference type="InterPro" id="IPR004516">
    <property type="entry name" value="HisRS/HisZ"/>
</dbReference>
<dbReference type="InterPro" id="IPR033656">
    <property type="entry name" value="HisRS_anticodon"/>
</dbReference>
<dbReference type="NCBIfam" id="TIGR00442">
    <property type="entry name" value="hisS"/>
    <property type="match status" value="1"/>
</dbReference>
<dbReference type="PANTHER" id="PTHR43707:SF1">
    <property type="entry name" value="HISTIDINE--TRNA LIGASE, MITOCHONDRIAL-RELATED"/>
    <property type="match status" value="1"/>
</dbReference>
<dbReference type="PANTHER" id="PTHR43707">
    <property type="entry name" value="HISTIDYL-TRNA SYNTHETASE"/>
    <property type="match status" value="1"/>
</dbReference>
<dbReference type="Pfam" id="PF03129">
    <property type="entry name" value="HGTP_anticodon"/>
    <property type="match status" value="1"/>
</dbReference>
<dbReference type="Pfam" id="PF13393">
    <property type="entry name" value="tRNA-synt_His"/>
    <property type="match status" value="1"/>
</dbReference>
<dbReference type="PIRSF" id="PIRSF001549">
    <property type="entry name" value="His-tRNA_synth"/>
    <property type="match status" value="1"/>
</dbReference>
<dbReference type="SUPFAM" id="SSF52954">
    <property type="entry name" value="Class II aaRS ABD-related"/>
    <property type="match status" value="1"/>
</dbReference>
<dbReference type="SUPFAM" id="SSF55681">
    <property type="entry name" value="Class II aaRS and biotin synthetases"/>
    <property type="match status" value="1"/>
</dbReference>
<dbReference type="PROSITE" id="PS50862">
    <property type="entry name" value="AA_TRNA_LIGASE_II"/>
    <property type="match status" value="1"/>
</dbReference>
<accession>Q49Y69</accession>
<name>SYH_STAS1</name>
<sequence length="420" mass="48254">MINIPRGTQDILPNETKKWRFIEARLDELMEVYNYQEIRTPIFESTELFARGVGDSTDVVQKEMYTFKDKGDRSITLRPEGTAAVVRSYIENKMQGLPNQPIKLYYNGPMFRYERKQKGRYRQFTQFGVEAIGAENPGVDAEVLAMAMHIYQSFGLKHLKLVINSIGDIDSRHEYNEALVKHFEPVIGDFCSDCQSRLHTNPMRILDCKIDKDKEAVKTAPRITEFLNETSKQYYADVKQHLDDLGVPYVEDPNLVRGLDYYTHTAFELMIDNPNYDGAITTLCGGGRYNGLLELLDGPHQTGIGFALSIERLLLALDEENIELDTEHDFDLFIVTMGEEADRYAVKLLNDLRRNGVKADKDYLQRKVKGQMKQADRLNANYTIVIGEQELQENKINVKNMQTGESESVDLDKLVNYFKK</sequence>
<feature type="chain" id="PRO_0000136259" description="Histidine--tRNA ligase">
    <location>
        <begin position="1"/>
        <end position="420"/>
    </location>
</feature>